<feature type="chain" id="PRO_1000188467" description="UPF0597 protein YhaM">
    <location>
        <begin position="1"/>
        <end position="436"/>
    </location>
</feature>
<sequence>MFESKINPLWQSFILAVQEEVKPALGCTEPISLALAAAAAAAELNGTVERIDAWVSPNLMKNGMGVTVPGTGMVGLPIAAALGALGGDAKAGLEVLKDASAKAVADAKAMLAAGHVAVMLQEPCNDILFSRAKVYSGDSWACVTIVGDHTNIVRIETDKGVVFTQADNAQEEEKTSPLGVLSHTSLEEILAFVNAVPFDAIRFILDAARLNGALSQEGLRGSWGLHIGSTLAKQCDRGLLAKDLSTAILIRTSAASDARMGGATLPAMSNSGSGNQGITATVPVMVVAEHVGADDERLARALMLSHLSAIYIHHQLPRLSALCAATTAAMGAAAGMAWLIDGRYDTIAMAISSMIGDVSGMICDGASNSCAMKVSTSASAAWKAVLMALDDTAVTGNEGIVAHNVEQSISNLCSLACRSMQQTDKQIIEIMASKAH</sequence>
<accession>B4TIW6</accession>
<organism>
    <name type="scientific">Salmonella heidelberg (strain SL476)</name>
    <dbReference type="NCBI Taxonomy" id="454169"/>
    <lineage>
        <taxon>Bacteria</taxon>
        <taxon>Pseudomonadati</taxon>
        <taxon>Pseudomonadota</taxon>
        <taxon>Gammaproteobacteria</taxon>
        <taxon>Enterobacterales</taxon>
        <taxon>Enterobacteriaceae</taxon>
        <taxon>Salmonella</taxon>
    </lineage>
</organism>
<comment type="similarity">
    <text evidence="1">Belongs to the UPF0597 family.</text>
</comment>
<reference key="1">
    <citation type="journal article" date="2011" name="J. Bacteriol.">
        <title>Comparative genomics of 28 Salmonella enterica isolates: evidence for CRISPR-mediated adaptive sublineage evolution.</title>
        <authorList>
            <person name="Fricke W.F."/>
            <person name="Mammel M.K."/>
            <person name="McDermott P.F."/>
            <person name="Tartera C."/>
            <person name="White D.G."/>
            <person name="Leclerc J.E."/>
            <person name="Ravel J."/>
            <person name="Cebula T.A."/>
        </authorList>
    </citation>
    <scope>NUCLEOTIDE SEQUENCE [LARGE SCALE GENOMIC DNA]</scope>
    <source>
        <strain>SL476</strain>
    </source>
</reference>
<evidence type="ECO:0000255" key="1">
    <source>
        <dbReference type="HAMAP-Rule" id="MF_01845"/>
    </source>
</evidence>
<protein>
    <recommendedName>
        <fullName evidence="1">UPF0597 protein YhaM</fullName>
    </recommendedName>
</protein>
<proteinExistence type="inferred from homology"/>
<gene>
    <name evidence="1" type="primary">yhaM</name>
    <name type="ordered locus">SeHA_C3533</name>
</gene>
<dbReference type="EMBL" id="CP001120">
    <property type="protein sequence ID" value="ACF67899.1"/>
    <property type="molecule type" value="Genomic_DNA"/>
</dbReference>
<dbReference type="RefSeq" id="WP_000463090.1">
    <property type="nucleotide sequence ID" value="NC_011083.1"/>
</dbReference>
<dbReference type="SMR" id="B4TIW6"/>
<dbReference type="KEGG" id="seh:SeHA_C3533"/>
<dbReference type="HOGENOM" id="CLU_051840_0_0_6"/>
<dbReference type="Proteomes" id="UP000001866">
    <property type="component" value="Chromosome"/>
</dbReference>
<dbReference type="GO" id="GO:0080146">
    <property type="term" value="F:L-cysteine desulfhydrase activity"/>
    <property type="evidence" value="ECO:0007669"/>
    <property type="project" value="TreeGrafter"/>
</dbReference>
<dbReference type="GO" id="GO:0019450">
    <property type="term" value="P:L-cysteine catabolic process to pyruvate"/>
    <property type="evidence" value="ECO:0007669"/>
    <property type="project" value="TreeGrafter"/>
</dbReference>
<dbReference type="HAMAP" id="MF_01845">
    <property type="entry name" value="UPF0597"/>
    <property type="match status" value="1"/>
</dbReference>
<dbReference type="InterPro" id="IPR005130">
    <property type="entry name" value="Ser_deHydtase-like_asu"/>
</dbReference>
<dbReference type="InterPro" id="IPR021144">
    <property type="entry name" value="UPF0597"/>
</dbReference>
<dbReference type="PANTHER" id="PTHR30501">
    <property type="entry name" value="UPF0597 PROTEIN YHAM"/>
    <property type="match status" value="1"/>
</dbReference>
<dbReference type="PANTHER" id="PTHR30501:SF2">
    <property type="entry name" value="UPF0597 PROTEIN YHAM"/>
    <property type="match status" value="1"/>
</dbReference>
<dbReference type="Pfam" id="PF03313">
    <property type="entry name" value="SDH_alpha"/>
    <property type="match status" value="1"/>
</dbReference>
<dbReference type="PIRSF" id="PIRSF006054">
    <property type="entry name" value="UCP006054"/>
    <property type="match status" value="1"/>
</dbReference>
<name>YHAM_SALHS</name>